<feature type="chain" id="PRO_0000097097" description="U-box domain-containing protein 14">
    <location>
        <begin position="1"/>
        <end position="632"/>
    </location>
</feature>
<feature type="domain" description="U-box">
    <location>
        <begin position="247"/>
        <end position="321"/>
    </location>
</feature>
<feature type="repeat" description="ARM 1">
    <location>
        <begin position="377"/>
        <end position="416"/>
    </location>
</feature>
<feature type="repeat" description="ARM 2">
    <location>
        <begin position="418"/>
        <end position="457"/>
    </location>
</feature>
<feature type="repeat" description="ARM 3">
    <location>
        <begin position="459"/>
        <end position="498"/>
    </location>
</feature>
<feature type="repeat" description="ARM 4">
    <location>
        <begin position="500"/>
        <end position="539"/>
    </location>
</feature>
<feature type="repeat" description="ARM 5">
    <location>
        <begin position="541"/>
        <end position="580"/>
    </location>
</feature>
<feature type="site" description="Putative E2 binding site">
    <location>
        <position position="256"/>
    </location>
</feature>
<feature type="site" description="Putative E2 binding site">
    <location>
        <position position="281"/>
    </location>
</feature>
<feature type="site" description="Putative E2 binding site">
    <location>
        <position position="290"/>
    </location>
</feature>
<feature type="strand" evidence="5">
    <location>
        <begin position="249"/>
        <end position="253"/>
    </location>
</feature>
<feature type="turn" evidence="5">
    <location>
        <begin position="255"/>
        <end position="257"/>
    </location>
</feature>
<feature type="strand" evidence="5">
    <location>
        <begin position="262"/>
        <end position="267"/>
    </location>
</feature>
<feature type="turn" evidence="5">
    <location>
        <begin position="268"/>
        <end position="270"/>
    </location>
</feature>
<feature type="strand" evidence="5">
    <location>
        <begin position="271"/>
        <end position="274"/>
    </location>
</feature>
<feature type="helix" evidence="5">
    <location>
        <begin position="275"/>
        <end position="282"/>
    </location>
</feature>
<feature type="turn" evidence="5">
    <location>
        <begin position="283"/>
        <end position="285"/>
    </location>
</feature>
<feature type="turn" evidence="5">
    <location>
        <begin position="290"/>
        <end position="292"/>
    </location>
</feature>
<feature type="turn" evidence="5">
    <location>
        <begin position="305"/>
        <end position="307"/>
    </location>
</feature>
<feature type="helix" evidence="5">
    <location>
        <begin position="308"/>
        <end position="317"/>
    </location>
</feature>
<organism>
    <name type="scientific">Arabidopsis thaliana</name>
    <name type="common">Mouse-ear cress</name>
    <dbReference type="NCBI Taxonomy" id="3702"/>
    <lineage>
        <taxon>Eukaryota</taxon>
        <taxon>Viridiplantae</taxon>
        <taxon>Streptophyta</taxon>
        <taxon>Embryophyta</taxon>
        <taxon>Tracheophyta</taxon>
        <taxon>Spermatophyta</taxon>
        <taxon>Magnoliopsida</taxon>
        <taxon>eudicotyledons</taxon>
        <taxon>Gunneridae</taxon>
        <taxon>Pentapetalae</taxon>
        <taxon>rosids</taxon>
        <taxon>malvids</taxon>
        <taxon>Brassicales</taxon>
        <taxon>Brassicaceae</taxon>
        <taxon>Camelineae</taxon>
        <taxon>Arabidopsis</taxon>
    </lineage>
</organism>
<gene>
    <name type="primary">PUB14</name>
    <name type="ordered locus">At3g54850</name>
    <name type="ORF">F28P10.170</name>
</gene>
<proteinExistence type="evidence at protein level"/>
<name>PUB14_ARATH</name>
<sequence length="632" mass="69397">MGLTNCCSHEELMSRLVDSVKEISGFSSSRGFIGKIQGDLVRRITLLSPFFEELIDVNVELKKDQITGFEAMRIALDSSLELFRSVNGGSKLFQLFDRDSLVEKFRDMTVEIEAALSQIPYEKIEVSEEVREQVQLLHFQFKRAKERWEESDLQLSHDLAMAENVMDPDPIILKRLSQELQLTTIDELKKESHAIHEYFLSYDGDPDDCFERMSSLLKNLVDFVTMESSDPDPSTGSRIVSRHRSPVIPEYFRCPISLELMKDPVIVSTGQTYERSSIQKWLDAGHKTCPKSQETLLHAGLTPNYVLKSLIALWCESNGIELPQNQGSCRTTKIGGSSSSDCDRTFVLSLLEKLANGTTEQQRAAAGELRLLAKRNVDNRVCIAEAGAIPLLVELLSSPDPRTQEHSVTALLNLSINEGNKGAIVDAGAITDIVEVLKNGSMEARENAAATLFSLSVIDENKVAIGAAGAIQALISLLEEGTRRGKKDAATAIFNLCIYQGNKSRAVKGGIVDPLTRLLKDAGGGMVDEALAILAILSTNQEGKTAIAEAESIPVLVEIIRTGSPRNRENAAAILWYLCIGNIERLNVAREVGADVALKELTENGTDRAKRKAASLLELIQQTEGVAVTTVP</sequence>
<protein>
    <recommendedName>
        <fullName>U-box domain-containing protein 14</fullName>
        <ecNumber>2.3.2.27</ecNumber>
    </recommendedName>
    <alternativeName>
        <fullName>E3 ubiquitin-protein ligase PUB14</fullName>
    </alternativeName>
    <alternativeName>
        <fullName>Plant U-box protein 14</fullName>
    </alternativeName>
    <alternativeName>
        <fullName>Prototypical U-box domain protein 14</fullName>
    </alternativeName>
    <alternativeName>
        <fullName evidence="4">RING-type E3 ubiquitin transferase PUB14</fullName>
    </alternativeName>
</protein>
<keyword id="KW-0002">3D-structure</keyword>
<keyword id="KW-1185">Reference proteome</keyword>
<keyword id="KW-0677">Repeat</keyword>
<keyword id="KW-0808">Transferase</keyword>
<keyword id="KW-0833">Ubl conjugation pathway</keyword>
<evidence type="ECO:0000269" key="1">
    <source>
    </source>
</evidence>
<evidence type="ECO:0000269" key="2">
    <source>
    </source>
</evidence>
<evidence type="ECO:0000269" key="3">
    <source>
    </source>
</evidence>
<evidence type="ECO:0000305" key="4"/>
<evidence type="ECO:0007829" key="5">
    <source>
        <dbReference type="PDB" id="1T1H"/>
    </source>
</evidence>
<reference key="1">
    <citation type="journal article" date="2000" name="Nature">
        <title>Sequence and analysis of chromosome 3 of the plant Arabidopsis thaliana.</title>
        <authorList>
            <person name="Salanoubat M."/>
            <person name="Lemcke K."/>
            <person name="Rieger M."/>
            <person name="Ansorge W."/>
            <person name="Unseld M."/>
            <person name="Fartmann B."/>
            <person name="Valle G."/>
            <person name="Bloecker H."/>
            <person name="Perez-Alonso M."/>
            <person name="Obermaier B."/>
            <person name="Delseny M."/>
            <person name="Boutry M."/>
            <person name="Grivell L.A."/>
            <person name="Mache R."/>
            <person name="Puigdomenech P."/>
            <person name="De Simone V."/>
            <person name="Choisne N."/>
            <person name="Artiguenave F."/>
            <person name="Robert C."/>
            <person name="Brottier P."/>
            <person name="Wincker P."/>
            <person name="Cattolico L."/>
            <person name="Weissenbach J."/>
            <person name="Saurin W."/>
            <person name="Quetier F."/>
            <person name="Schaefer M."/>
            <person name="Mueller-Auer S."/>
            <person name="Gabel C."/>
            <person name="Fuchs M."/>
            <person name="Benes V."/>
            <person name="Wurmbach E."/>
            <person name="Drzonek H."/>
            <person name="Erfle H."/>
            <person name="Jordan N."/>
            <person name="Bangert S."/>
            <person name="Wiedelmann R."/>
            <person name="Kranz H."/>
            <person name="Voss H."/>
            <person name="Holland R."/>
            <person name="Brandt P."/>
            <person name="Nyakatura G."/>
            <person name="Vezzi A."/>
            <person name="D'Angelo M."/>
            <person name="Pallavicini A."/>
            <person name="Toppo S."/>
            <person name="Simionati B."/>
            <person name="Conrad A."/>
            <person name="Hornischer K."/>
            <person name="Kauer G."/>
            <person name="Loehnert T.-H."/>
            <person name="Nordsiek G."/>
            <person name="Reichelt J."/>
            <person name="Scharfe M."/>
            <person name="Schoen O."/>
            <person name="Bargues M."/>
            <person name="Terol J."/>
            <person name="Climent J."/>
            <person name="Navarro P."/>
            <person name="Collado C."/>
            <person name="Perez-Perez A."/>
            <person name="Ottenwaelder B."/>
            <person name="Duchemin D."/>
            <person name="Cooke R."/>
            <person name="Laudie M."/>
            <person name="Berger-Llauro C."/>
            <person name="Purnelle B."/>
            <person name="Masuy D."/>
            <person name="de Haan M."/>
            <person name="Maarse A.C."/>
            <person name="Alcaraz J.-P."/>
            <person name="Cottet A."/>
            <person name="Casacuberta E."/>
            <person name="Monfort A."/>
            <person name="Argiriou A."/>
            <person name="Flores M."/>
            <person name="Liguori R."/>
            <person name="Vitale D."/>
            <person name="Mannhaupt G."/>
            <person name="Haase D."/>
            <person name="Schoof H."/>
            <person name="Rudd S."/>
            <person name="Zaccaria P."/>
            <person name="Mewes H.-W."/>
            <person name="Mayer K.F.X."/>
            <person name="Kaul S."/>
            <person name="Town C.D."/>
            <person name="Koo H.L."/>
            <person name="Tallon L.J."/>
            <person name="Jenkins J."/>
            <person name="Rooney T."/>
            <person name="Rizzo M."/>
            <person name="Walts A."/>
            <person name="Utterback T."/>
            <person name="Fujii C.Y."/>
            <person name="Shea T.P."/>
            <person name="Creasy T.H."/>
            <person name="Haas B."/>
            <person name="Maiti R."/>
            <person name="Wu D."/>
            <person name="Peterson J."/>
            <person name="Van Aken S."/>
            <person name="Pai G."/>
            <person name="Militscher J."/>
            <person name="Sellers P."/>
            <person name="Gill J.E."/>
            <person name="Feldblyum T.V."/>
            <person name="Preuss D."/>
            <person name="Lin X."/>
            <person name="Nierman W.C."/>
            <person name="Salzberg S.L."/>
            <person name="White O."/>
            <person name="Venter J.C."/>
            <person name="Fraser C.M."/>
            <person name="Kaneko T."/>
            <person name="Nakamura Y."/>
            <person name="Sato S."/>
            <person name="Kato T."/>
            <person name="Asamizu E."/>
            <person name="Sasamoto S."/>
            <person name="Kimura T."/>
            <person name="Idesawa K."/>
            <person name="Kawashima K."/>
            <person name="Kishida Y."/>
            <person name="Kiyokawa C."/>
            <person name="Kohara M."/>
            <person name="Matsumoto M."/>
            <person name="Matsuno A."/>
            <person name="Muraki A."/>
            <person name="Nakayama S."/>
            <person name="Nakazaki N."/>
            <person name="Shinpo S."/>
            <person name="Takeuchi C."/>
            <person name="Wada T."/>
            <person name="Watanabe A."/>
            <person name="Yamada M."/>
            <person name="Yasuda M."/>
            <person name="Tabata S."/>
        </authorList>
    </citation>
    <scope>NUCLEOTIDE SEQUENCE [LARGE SCALE GENOMIC DNA]</scope>
    <source>
        <strain>cv. Columbia</strain>
    </source>
</reference>
<reference key="2">
    <citation type="journal article" date="2017" name="Plant J.">
        <title>Araport11: a complete reannotation of the Arabidopsis thaliana reference genome.</title>
        <authorList>
            <person name="Cheng C.Y."/>
            <person name="Krishnakumar V."/>
            <person name="Chan A.P."/>
            <person name="Thibaud-Nissen F."/>
            <person name="Schobel S."/>
            <person name="Town C.D."/>
        </authorList>
    </citation>
    <scope>GENOME REANNOTATION</scope>
    <source>
        <strain>cv. Columbia</strain>
    </source>
</reference>
<reference key="3">
    <citation type="journal article" date="2003" name="Science">
        <title>Empirical analysis of transcriptional activity in the Arabidopsis genome.</title>
        <authorList>
            <person name="Yamada K."/>
            <person name="Lim J."/>
            <person name="Dale J.M."/>
            <person name="Chen H."/>
            <person name="Shinn P."/>
            <person name="Palm C.J."/>
            <person name="Southwick A.M."/>
            <person name="Wu H.C."/>
            <person name="Kim C.J."/>
            <person name="Nguyen M."/>
            <person name="Pham P.K."/>
            <person name="Cheuk R.F."/>
            <person name="Karlin-Newmann G."/>
            <person name="Liu S.X."/>
            <person name="Lam B."/>
            <person name="Sakano H."/>
            <person name="Wu T."/>
            <person name="Yu G."/>
            <person name="Miranda M."/>
            <person name="Quach H.L."/>
            <person name="Tripp M."/>
            <person name="Chang C.H."/>
            <person name="Lee J.M."/>
            <person name="Toriumi M.J."/>
            <person name="Chan M.M."/>
            <person name="Tang C.C."/>
            <person name="Onodera C.S."/>
            <person name="Deng J.M."/>
            <person name="Akiyama K."/>
            <person name="Ansari Y."/>
            <person name="Arakawa T."/>
            <person name="Banh J."/>
            <person name="Banno F."/>
            <person name="Bowser L."/>
            <person name="Brooks S.Y."/>
            <person name="Carninci P."/>
            <person name="Chao Q."/>
            <person name="Choy N."/>
            <person name="Enju A."/>
            <person name="Goldsmith A.D."/>
            <person name="Gurjal M."/>
            <person name="Hansen N.F."/>
            <person name="Hayashizaki Y."/>
            <person name="Johnson-Hopson C."/>
            <person name="Hsuan V.W."/>
            <person name="Iida K."/>
            <person name="Karnes M."/>
            <person name="Khan S."/>
            <person name="Koesema E."/>
            <person name="Ishida J."/>
            <person name="Jiang P.X."/>
            <person name="Jones T."/>
            <person name="Kawai J."/>
            <person name="Kamiya A."/>
            <person name="Meyers C."/>
            <person name="Nakajima M."/>
            <person name="Narusaka M."/>
            <person name="Seki M."/>
            <person name="Sakurai T."/>
            <person name="Satou M."/>
            <person name="Tamse R."/>
            <person name="Vaysberg M."/>
            <person name="Wallender E.K."/>
            <person name="Wong C."/>
            <person name="Yamamura Y."/>
            <person name="Yuan S."/>
            <person name="Shinozaki K."/>
            <person name="Davis R.W."/>
            <person name="Theologis A."/>
            <person name="Ecker J.R."/>
        </authorList>
    </citation>
    <scope>NUCLEOTIDE SEQUENCE [LARGE SCALE MRNA]</scope>
    <source>
        <strain>cv. Columbia</strain>
    </source>
</reference>
<reference key="4">
    <citation type="journal article" date="2001" name="Trends Plant Sci.">
        <title>The U-box protein family in plants.</title>
        <authorList>
            <person name="Azevedo C."/>
            <person name="Santos-Rosa M.J."/>
            <person name="Shirasu K."/>
        </authorList>
    </citation>
    <scope>GENE FAMILY ORGANIZATION</scope>
    <scope>NOMENCLATURE</scope>
</reference>
<reference key="5">
    <citation type="journal article" date="2004" name="J. Biol. Chem.">
        <title>Structure and biochemical function of a prototypical Arabidopsis U-box domain.</title>
        <authorList>
            <person name="Andersen P."/>
            <person name="Kragelund B.B."/>
            <person name="Olsen A.N."/>
            <person name="Larsen F.H."/>
            <person name="Chua N.H."/>
            <person name="Poulsen F.M."/>
            <person name="Skriver K."/>
        </authorList>
    </citation>
    <scope>FUNCTION</scope>
    <scope>TISSUE SPECIFICITY</scope>
    <scope>STRUCTURE BY NMR OF 244-321</scope>
</reference>
<reference key="6">
    <citation type="journal article" date="2004" name="Plant Physiol.">
        <title>A large complement of the predicted Arabidopsis ARM repeat proteins are members of the U-box E3 ubiquitin ligase family.</title>
        <authorList>
            <person name="Mudgil Y."/>
            <person name="Shiu S.-H."/>
            <person name="Stone S.L."/>
            <person name="Salt J.N."/>
            <person name="Goring D.R."/>
        </authorList>
    </citation>
    <scope>GENE FAMILY ORGANIZATION</scope>
</reference>
<reference key="7">
    <citation type="journal article" date="2010" name="J. Mol. Biol.">
        <title>PAH-domain-specific interactions of the Arabidopsis transcription coregulator SIN3-LIKE1 (SNL1) with telomere-binding protein 1 and ALWAYS EARLY2 Myb-DNA binding factors.</title>
        <authorList>
            <person name="Bowen A.J."/>
            <person name="Gonzalez D."/>
            <person name="Mullins J.G."/>
            <person name="Bhatt A.M."/>
            <person name="Martinez A."/>
            <person name="Conlan R.S."/>
        </authorList>
    </citation>
    <scope>INTERACTION WITH SNL1</scope>
</reference>
<reference key="8">
    <citation type="journal article" date="2008" name="Plant Physiol.">
        <title>Interactions between the S-domain receptor kinases and AtPUB-ARM E3 ubiquitin ligases suggest a conserved signaling pathway in Arabidopsis.</title>
        <authorList>
            <person name="Samuel M.A."/>
            <person name="Mudgil Y."/>
            <person name="Salt J.N."/>
            <person name="Delmas F."/>
            <person name="Ramachandran S."/>
            <person name="Chilelli A."/>
            <person name="Goring D.R."/>
        </authorList>
    </citation>
    <scope>INTERACTION WITH SD11; SD16; SD17; SD18; SD113; SD129 AND SD25</scope>
</reference>
<accession>Q8VZ40</accession>
<accession>Q9SV34</accession>
<comment type="function">
    <text evidence="1">Functions as an E3 ubiquitin ligase with specific E2 ubiquitin-conjugating enzymes. Undergoes auto-ubiquitination.</text>
</comment>
<comment type="catalytic activity">
    <reaction>
        <text>S-ubiquitinyl-[E2 ubiquitin-conjugating enzyme]-L-cysteine + [acceptor protein]-L-lysine = [E2 ubiquitin-conjugating enzyme]-L-cysteine + N(6)-ubiquitinyl-[acceptor protein]-L-lysine.</text>
        <dbReference type="EC" id="2.3.2.27"/>
    </reaction>
</comment>
<comment type="pathway">
    <text>Protein modification; protein ubiquitination.</text>
</comment>
<comment type="subunit">
    <text evidence="2 3 4">Homodimer (Probable). Interacts with SNL1. Binds to SD11, SD16, SD17, SD18, SD113, SD129 and SD25.</text>
</comment>
<comment type="interaction">
    <interactant intactId="EBI-4434802">
        <id>Q8VZ40</id>
    </interactant>
    <interactant intactId="EBI-4426557">
        <id>Q84MB2</id>
        <label>TIFY8</label>
    </interactant>
    <organismsDiffer>false</organismsDiffer>
    <experiments>3</experiments>
</comment>
<comment type="tissue specificity">
    <text evidence="1">Expressed in flowers, green siliques, seeds and rosette leaves.</text>
</comment>
<comment type="domain">
    <text>The U-box N-terminal domain (UND) is not required for in vitro ubiquitination activity.</text>
</comment>
<comment type="sequence caution" evidence="4">
    <conflict type="erroneous gene model prediction">
        <sequence resource="EMBL-CDS" id="CAB41099"/>
    </conflict>
</comment>
<dbReference type="EC" id="2.3.2.27"/>
<dbReference type="EMBL" id="AL049655">
    <property type="protein sequence ID" value="CAB41099.1"/>
    <property type="status" value="ALT_SEQ"/>
    <property type="molecule type" value="Genomic_DNA"/>
</dbReference>
<dbReference type="EMBL" id="CP002686">
    <property type="protein sequence ID" value="AEE79300.1"/>
    <property type="molecule type" value="Genomic_DNA"/>
</dbReference>
<dbReference type="EMBL" id="AY065279">
    <property type="protein sequence ID" value="AAL38755.1"/>
    <property type="molecule type" value="mRNA"/>
</dbReference>
<dbReference type="EMBL" id="AY096530">
    <property type="protein sequence ID" value="AAM20180.1"/>
    <property type="molecule type" value="mRNA"/>
</dbReference>
<dbReference type="PIR" id="T06735">
    <property type="entry name" value="T06735"/>
</dbReference>
<dbReference type="RefSeq" id="NP_191045.2">
    <property type="nucleotide sequence ID" value="NM_115342.5"/>
</dbReference>
<dbReference type="PDB" id="1T1H">
    <property type="method" value="NMR"/>
    <property type="chains" value="A=249-321"/>
</dbReference>
<dbReference type="PDBsum" id="1T1H"/>
<dbReference type="BMRB" id="Q8VZ40"/>
<dbReference type="SMR" id="Q8VZ40"/>
<dbReference type="BioGRID" id="9966">
    <property type="interactions" value="15"/>
</dbReference>
<dbReference type="FunCoup" id="Q8VZ40">
    <property type="interactions" value="1379"/>
</dbReference>
<dbReference type="IntAct" id="Q8VZ40">
    <property type="interactions" value="15"/>
</dbReference>
<dbReference type="STRING" id="3702.Q8VZ40"/>
<dbReference type="iPTMnet" id="Q8VZ40"/>
<dbReference type="PaxDb" id="3702-AT3G54850.1"/>
<dbReference type="ProteomicsDB" id="226070"/>
<dbReference type="EnsemblPlants" id="AT3G54850.1">
    <property type="protein sequence ID" value="AT3G54850.1"/>
    <property type="gene ID" value="AT3G54850"/>
</dbReference>
<dbReference type="GeneID" id="824650"/>
<dbReference type="Gramene" id="AT3G54850.1">
    <property type="protein sequence ID" value="AT3G54850.1"/>
    <property type="gene ID" value="AT3G54850"/>
</dbReference>
<dbReference type="KEGG" id="ath:AT3G54850"/>
<dbReference type="Araport" id="AT3G54850"/>
<dbReference type="TAIR" id="AT3G54850">
    <property type="gene designation" value="PUB14"/>
</dbReference>
<dbReference type="eggNOG" id="KOG0167">
    <property type="taxonomic scope" value="Eukaryota"/>
</dbReference>
<dbReference type="HOGENOM" id="CLU_006348_5_1_1"/>
<dbReference type="InParanoid" id="Q8VZ40"/>
<dbReference type="OMA" id="DCFERMS"/>
<dbReference type="OrthoDB" id="7537227at2759"/>
<dbReference type="PhylomeDB" id="Q8VZ40"/>
<dbReference type="UniPathway" id="UPA00143"/>
<dbReference type="EvolutionaryTrace" id="Q8VZ40"/>
<dbReference type="PRO" id="PR:Q8VZ40"/>
<dbReference type="Proteomes" id="UP000006548">
    <property type="component" value="Chromosome 3"/>
</dbReference>
<dbReference type="ExpressionAtlas" id="Q8VZ40">
    <property type="expression patterns" value="baseline and differential"/>
</dbReference>
<dbReference type="GO" id="GO:0070696">
    <property type="term" value="F:transmembrane receptor protein serine/threonine kinase binding"/>
    <property type="evidence" value="ECO:0000353"/>
    <property type="project" value="UniProtKB"/>
</dbReference>
<dbReference type="GO" id="GO:0004842">
    <property type="term" value="F:ubiquitin-protein transferase activity"/>
    <property type="evidence" value="ECO:0000314"/>
    <property type="project" value="TAIR"/>
</dbReference>
<dbReference type="GO" id="GO:0016567">
    <property type="term" value="P:protein ubiquitination"/>
    <property type="evidence" value="ECO:0007669"/>
    <property type="project" value="UniProtKB-UniPathway"/>
</dbReference>
<dbReference type="CDD" id="cd16664">
    <property type="entry name" value="RING-Ubox_PUB"/>
    <property type="match status" value="1"/>
</dbReference>
<dbReference type="FunFam" id="1.25.10.10:FF:000239">
    <property type="entry name" value="RING-type E3 ubiquitin transferase"/>
    <property type="match status" value="1"/>
</dbReference>
<dbReference type="FunFam" id="1.25.10.10:FF:000289">
    <property type="entry name" value="RING-type E3 ubiquitin transferase"/>
    <property type="match status" value="1"/>
</dbReference>
<dbReference type="FunFam" id="3.30.40.10:FF:000114">
    <property type="entry name" value="RING-type E3 ubiquitin transferase"/>
    <property type="match status" value="1"/>
</dbReference>
<dbReference type="Gene3D" id="1.25.10.10">
    <property type="entry name" value="Leucine-rich Repeat Variant"/>
    <property type="match status" value="2"/>
</dbReference>
<dbReference type="Gene3D" id="3.30.40.10">
    <property type="entry name" value="Zinc/RING finger domain, C3HC4 (zinc finger)"/>
    <property type="match status" value="1"/>
</dbReference>
<dbReference type="InterPro" id="IPR011989">
    <property type="entry name" value="ARM-like"/>
</dbReference>
<dbReference type="InterPro" id="IPR016024">
    <property type="entry name" value="ARM-type_fold"/>
</dbReference>
<dbReference type="InterPro" id="IPR000225">
    <property type="entry name" value="Armadillo"/>
</dbReference>
<dbReference type="InterPro" id="IPR045210">
    <property type="entry name" value="RING-Ubox_PUB"/>
</dbReference>
<dbReference type="InterPro" id="IPR003613">
    <property type="entry name" value="Ubox_domain"/>
</dbReference>
<dbReference type="InterPro" id="IPR013083">
    <property type="entry name" value="Znf_RING/FYVE/PHD"/>
</dbReference>
<dbReference type="PANTHER" id="PTHR23315">
    <property type="entry name" value="U BOX DOMAIN-CONTAINING"/>
    <property type="match status" value="1"/>
</dbReference>
<dbReference type="PANTHER" id="PTHR23315:SF111">
    <property type="entry name" value="U-BOX DOMAIN-CONTAINING PROTEIN 14"/>
    <property type="match status" value="1"/>
</dbReference>
<dbReference type="Pfam" id="PF00514">
    <property type="entry name" value="Arm"/>
    <property type="match status" value="3"/>
</dbReference>
<dbReference type="Pfam" id="PF25368">
    <property type="entry name" value="PUB10_N"/>
    <property type="match status" value="1"/>
</dbReference>
<dbReference type="Pfam" id="PF04564">
    <property type="entry name" value="U-box"/>
    <property type="match status" value="1"/>
</dbReference>
<dbReference type="SMART" id="SM00185">
    <property type="entry name" value="ARM"/>
    <property type="match status" value="5"/>
</dbReference>
<dbReference type="SMART" id="SM00504">
    <property type="entry name" value="Ubox"/>
    <property type="match status" value="1"/>
</dbReference>
<dbReference type="SUPFAM" id="SSF48371">
    <property type="entry name" value="ARM repeat"/>
    <property type="match status" value="1"/>
</dbReference>
<dbReference type="SUPFAM" id="SSF57850">
    <property type="entry name" value="RING/U-box"/>
    <property type="match status" value="1"/>
</dbReference>
<dbReference type="PROSITE" id="PS50176">
    <property type="entry name" value="ARM_REPEAT"/>
    <property type="match status" value="2"/>
</dbReference>
<dbReference type="PROSITE" id="PS51698">
    <property type="entry name" value="U_BOX"/>
    <property type="match status" value="1"/>
</dbReference>